<keyword id="KW-0963">Cytoplasm</keyword>
<keyword id="KW-0501">Molybdenum cofactor biosynthesis</keyword>
<keyword id="KW-1185">Reference proteome</keyword>
<feature type="chain" id="PRO_0000152896" description="Sulfur carrier protein FdhD">
    <location>
        <begin position="1"/>
        <end position="274"/>
    </location>
</feature>
<feature type="active site" description="Cysteine persulfide intermediate" evidence="1">
    <location>
        <position position="120"/>
    </location>
</feature>
<comment type="function">
    <text evidence="1">Required for formate dehydrogenase (FDH) activity. Acts as a sulfur carrier protein that transfers sulfur from IscS to the molybdenum cofactor prior to its insertion into FDH.</text>
</comment>
<comment type="subcellular location">
    <subcellularLocation>
        <location evidence="1">Cytoplasm</location>
    </subcellularLocation>
</comment>
<comment type="similarity">
    <text evidence="1">Belongs to the FdhD family.</text>
</comment>
<gene>
    <name evidence="1" type="primary">fdhD</name>
    <name type="ordered locus">BPSL0652</name>
</gene>
<proteinExistence type="inferred from homology"/>
<name>FDHD_BURPS</name>
<reference key="1">
    <citation type="journal article" date="2004" name="Proc. Natl. Acad. Sci. U.S.A.">
        <title>Genomic plasticity of the causative agent of melioidosis, Burkholderia pseudomallei.</title>
        <authorList>
            <person name="Holden M.T.G."/>
            <person name="Titball R.W."/>
            <person name="Peacock S.J."/>
            <person name="Cerdeno-Tarraga A.-M."/>
            <person name="Atkins T."/>
            <person name="Crossman L.C."/>
            <person name="Pitt T."/>
            <person name="Churcher C."/>
            <person name="Mungall K.L."/>
            <person name="Bentley S.D."/>
            <person name="Sebaihia M."/>
            <person name="Thomson N.R."/>
            <person name="Bason N."/>
            <person name="Beacham I.R."/>
            <person name="Brooks K."/>
            <person name="Brown K.A."/>
            <person name="Brown N.F."/>
            <person name="Challis G.L."/>
            <person name="Cherevach I."/>
            <person name="Chillingworth T."/>
            <person name="Cronin A."/>
            <person name="Crossett B."/>
            <person name="Davis P."/>
            <person name="DeShazer D."/>
            <person name="Feltwell T."/>
            <person name="Fraser A."/>
            <person name="Hance Z."/>
            <person name="Hauser H."/>
            <person name="Holroyd S."/>
            <person name="Jagels K."/>
            <person name="Keith K.E."/>
            <person name="Maddison M."/>
            <person name="Moule S."/>
            <person name="Price C."/>
            <person name="Quail M.A."/>
            <person name="Rabbinowitsch E."/>
            <person name="Rutherford K."/>
            <person name="Sanders M."/>
            <person name="Simmonds M."/>
            <person name="Songsivilai S."/>
            <person name="Stevens K."/>
            <person name="Tumapa S."/>
            <person name="Vesaratchavest M."/>
            <person name="Whitehead S."/>
            <person name="Yeats C."/>
            <person name="Barrell B.G."/>
            <person name="Oyston P.C.F."/>
            <person name="Parkhill J."/>
        </authorList>
    </citation>
    <scope>NUCLEOTIDE SEQUENCE [LARGE SCALE GENOMIC DNA]</scope>
    <source>
        <strain>K96243</strain>
    </source>
</reference>
<sequence length="274" mass="29004">MSLSETVEPSGIVELAVRRRRGDAAETAVDRVGQEWPVALVFNGISHAVMMCTPRDLEAFAVGFAVSEGIVERGSDVKDIEVALHGAGPLPHAEVQLTVVQQAFAALKEKRRALAGRTGCGVCGIESIGLLDLVPQRLPDTGFLARLAPDAIARAARELPAHQALTRQTGGLHAAAWCDASGAIVHAFEDIGRHNALDKLIGTLTLTRADMANGFVFLSSRASYELVRKSARVGIPMVATISAPSSLAIEIARQAGLRLVSFCREAGYVDYGTA</sequence>
<dbReference type="EMBL" id="BX571965">
    <property type="protein sequence ID" value="CAH34645.1"/>
    <property type="molecule type" value="Genomic_DNA"/>
</dbReference>
<dbReference type="RefSeq" id="WP_004189566.1">
    <property type="nucleotide sequence ID" value="NZ_CP009538.1"/>
</dbReference>
<dbReference type="RefSeq" id="YP_107281.1">
    <property type="nucleotide sequence ID" value="NC_006350.1"/>
</dbReference>
<dbReference type="SMR" id="Q63X85"/>
<dbReference type="STRING" id="272560.BPSL0652"/>
<dbReference type="GeneID" id="92977979"/>
<dbReference type="KEGG" id="bps:BPSL0652"/>
<dbReference type="PATRIC" id="fig|272560.51.peg.970"/>
<dbReference type="eggNOG" id="COG1526">
    <property type="taxonomic scope" value="Bacteria"/>
</dbReference>
<dbReference type="Proteomes" id="UP000000605">
    <property type="component" value="Chromosome 1"/>
</dbReference>
<dbReference type="GO" id="GO:0005737">
    <property type="term" value="C:cytoplasm"/>
    <property type="evidence" value="ECO:0007669"/>
    <property type="project" value="UniProtKB-SubCell"/>
</dbReference>
<dbReference type="GO" id="GO:0097163">
    <property type="term" value="F:sulfur carrier activity"/>
    <property type="evidence" value="ECO:0007669"/>
    <property type="project" value="UniProtKB-UniRule"/>
</dbReference>
<dbReference type="GO" id="GO:0016783">
    <property type="term" value="F:sulfurtransferase activity"/>
    <property type="evidence" value="ECO:0007669"/>
    <property type="project" value="InterPro"/>
</dbReference>
<dbReference type="GO" id="GO:0006777">
    <property type="term" value="P:Mo-molybdopterin cofactor biosynthetic process"/>
    <property type="evidence" value="ECO:0007669"/>
    <property type="project" value="UniProtKB-UniRule"/>
</dbReference>
<dbReference type="Gene3D" id="3.10.20.10">
    <property type="match status" value="1"/>
</dbReference>
<dbReference type="Gene3D" id="3.40.140.10">
    <property type="entry name" value="Cytidine Deaminase, domain 2"/>
    <property type="match status" value="1"/>
</dbReference>
<dbReference type="HAMAP" id="MF_00187">
    <property type="entry name" value="FdhD"/>
    <property type="match status" value="1"/>
</dbReference>
<dbReference type="InterPro" id="IPR016193">
    <property type="entry name" value="Cytidine_deaminase-like"/>
</dbReference>
<dbReference type="InterPro" id="IPR003786">
    <property type="entry name" value="FdhD"/>
</dbReference>
<dbReference type="NCBIfam" id="TIGR00129">
    <property type="entry name" value="fdhD_narQ"/>
    <property type="match status" value="1"/>
</dbReference>
<dbReference type="PANTHER" id="PTHR30592">
    <property type="entry name" value="FORMATE DEHYDROGENASE"/>
    <property type="match status" value="1"/>
</dbReference>
<dbReference type="PANTHER" id="PTHR30592:SF1">
    <property type="entry name" value="SULFUR CARRIER PROTEIN FDHD"/>
    <property type="match status" value="1"/>
</dbReference>
<dbReference type="Pfam" id="PF02634">
    <property type="entry name" value="FdhD-NarQ"/>
    <property type="match status" value="1"/>
</dbReference>
<dbReference type="PIRSF" id="PIRSF015626">
    <property type="entry name" value="FdhD"/>
    <property type="match status" value="1"/>
</dbReference>
<dbReference type="SUPFAM" id="SSF53927">
    <property type="entry name" value="Cytidine deaminase-like"/>
    <property type="match status" value="1"/>
</dbReference>
<protein>
    <recommendedName>
        <fullName evidence="1">Sulfur carrier protein FdhD</fullName>
    </recommendedName>
</protein>
<evidence type="ECO:0000255" key="1">
    <source>
        <dbReference type="HAMAP-Rule" id="MF_00187"/>
    </source>
</evidence>
<accession>Q63X85</accession>
<organism>
    <name type="scientific">Burkholderia pseudomallei (strain K96243)</name>
    <dbReference type="NCBI Taxonomy" id="272560"/>
    <lineage>
        <taxon>Bacteria</taxon>
        <taxon>Pseudomonadati</taxon>
        <taxon>Pseudomonadota</taxon>
        <taxon>Betaproteobacteria</taxon>
        <taxon>Burkholderiales</taxon>
        <taxon>Burkholderiaceae</taxon>
        <taxon>Burkholderia</taxon>
        <taxon>pseudomallei group</taxon>
    </lineage>
</organism>